<feature type="chain" id="PRO_0000415532" description="Replication-associated protein">
    <location>
        <begin position="1"/>
        <end position="353"/>
    </location>
</feature>
<feature type="domain" description="CRESS-DNA virus Rep endonuclease" evidence="3">
    <location>
        <begin position="8"/>
        <end position="116"/>
    </location>
</feature>
<feature type="region of interest" description="Binding to RBR1" evidence="1">
    <location>
        <begin position="143"/>
        <end position="153"/>
    </location>
</feature>
<feature type="region of interest" description="Oligomerization" evidence="1">
    <location>
        <begin position="156"/>
        <end position="176"/>
    </location>
</feature>
<feature type="short sequence motif" description="RCR-1" evidence="3">
    <location>
        <begin position="15"/>
        <end position="18"/>
    </location>
</feature>
<feature type="short sequence motif" description="RCR-2" evidence="3">
    <location>
        <begin position="57"/>
        <end position="59"/>
    </location>
</feature>
<feature type="short sequence motif" description="RCR-3" evidence="3">
    <location>
        <begin position="103"/>
        <end position="106"/>
    </location>
</feature>
<feature type="active site" description="For DNA cleavage activity" evidence="3">
    <location>
        <position position="103"/>
    </location>
</feature>
<feature type="binding site" evidence="3">
    <location>
        <position position="49"/>
    </location>
    <ligand>
        <name>a divalent metal cation</name>
        <dbReference type="ChEBI" id="CHEBI:60240"/>
    </ligand>
</feature>
<feature type="binding site" evidence="3">
    <location>
        <position position="57"/>
    </location>
    <ligand>
        <name>a divalent metal cation</name>
        <dbReference type="ChEBI" id="CHEBI:60240"/>
    </ligand>
</feature>
<feature type="binding site" evidence="3">
    <location>
        <position position="59"/>
    </location>
    <ligand>
        <name>a divalent metal cation</name>
        <dbReference type="ChEBI" id="CHEBI:60240"/>
    </ligand>
</feature>
<feature type="binding site" evidence="3">
    <location>
        <position position="107"/>
    </location>
    <ligand>
        <name>a divalent metal cation</name>
        <dbReference type="ChEBI" id="CHEBI:60240"/>
    </ligand>
</feature>
<feature type="binding site" evidence="2">
    <location>
        <begin position="222"/>
        <end position="229"/>
    </location>
    <ligand>
        <name>ATP</name>
        <dbReference type="ChEBI" id="CHEBI:30616"/>
    </ligand>
</feature>
<keyword id="KW-0067">ATP-binding</keyword>
<keyword id="KW-0190">Covalent protein-DNA linkage</keyword>
<keyword id="KW-0235">DNA replication</keyword>
<keyword id="KW-0238">DNA-binding</keyword>
<keyword id="KW-0255">Endonuclease</keyword>
<keyword id="KW-0347">Helicase</keyword>
<keyword id="KW-1048">Host nucleus</keyword>
<keyword id="KW-0945">Host-virus interaction</keyword>
<keyword id="KW-0378">Hydrolase</keyword>
<keyword id="KW-0479">Metal-binding</keyword>
<keyword id="KW-0511">Multifunctional enzyme</keyword>
<keyword id="KW-0540">Nuclease</keyword>
<keyword id="KW-0547">Nucleotide-binding</keyword>
<keyword id="KW-0548">Nucleotidyltransferase</keyword>
<keyword id="KW-1185">Reference proteome</keyword>
<keyword id="KW-0808">Transferase</keyword>
<accession>P0CK40</accession>
<accession>P05175</accession>
<accession>P87726</accession>
<organismHost>
    <name type="scientific">Macroptilium lathyroides</name>
    <dbReference type="NCBI Taxonomy" id="260885"/>
</organismHost>
<organismHost>
    <name type="scientific">Malvastrum coromandelianum</name>
    <dbReference type="NCBI Taxonomy" id="108453"/>
</organismHost>
<organismHost>
    <name type="scientific">Phaseolus lunatus</name>
    <name type="common">Lima bean</name>
    <name type="synonym">Phaseolus limensis</name>
    <dbReference type="NCBI Taxonomy" id="3884"/>
</organismHost>
<organismHost>
    <name type="scientific">Phaseolus vulgaris</name>
    <name type="common">Kidney bean</name>
    <name type="synonym">French bean</name>
    <dbReference type="NCBI Taxonomy" id="3885"/>
</organismHost>
<proteinExistence type="evidence at protein level"/>
<gene>
    <name type="ORF">AC1</name>
    <name type="ORF">AL1</name>
</gene>
<evidence type="ECO:0000250" key="1"/>
<evidence type="ECO:0000255" key="2"/>
<evidence type="ECO:0000255" key="3">
    <source>
        <dbReference type="PROSITE-ProRule" id="PRU01364"/>
    </source>
</evidence>
<evidence type="ECO:0000269" key="4">
    <source>
    </source>
</evidence>
<evidence type="ECO:0000305" key="5"/>
<reference key="1">
    <citation type="journal article" date="1987" name="Microbiol. Immunol.">
        <title>Total nucleotide sequences of the infectious cloned DNAs of bean golden mosaic virus.</title>
        <authorList>
            <person name="Morinaga T."/>
            <person name="Ikegami M."/>
            <person name="Shimotohno K."/>
            <person name="Miura K."/>
        </authorList>
    </citation>
    <scope>NUCLEOTIDE SEQUENCE [GENOMIC DNA]</scope>
    <source>
        <strain>Isolate Puerto Rico-Japan</strain>
    </source>
</reference>
<reference key="2">
    <citation type="journal article" date="2012" name="FASEB J.">
        <title>A novel role for RAD54: this host protein modulates geminiviral DNA replication.</title>
        <authorList>
            <person name="Kaliappan K."/>
            <person name="Choudhury N.R."/>
            <person name="Suyal G."/>
            <person name="Mukherjee S.K."/>
        </authorList>
    </citation>
    <scope>FUNCTION</scope>
    <scope>INTERACTION WITH THE HOST RAD54 PROTEIN</scope>
    <source>
        <strain>Mungbean yellow mosaic virus</strain>
        <strain>Tomato leaf curl virus</strain>
    </source>
</reference>
<sequence>MPPPQRFRVQSKNYFLTYPRCTIPKEEALSQLQKIHTTTNKKFIKVCEERHDNGEPHLHALIQFEGKFICTNKRLFDLVSTTRSAHFHPNIQGAKSSSDVKEYIDKDGVTIEWGQFQVDGRSARGGQQSANDSYAKALNADSIESALTILKEEQPKDYVLQNHNIRSNLERIFFKVPEPWVPPFPLSSFVNIPVVMQDWVDDYFGRGSAARPERPISIIVEGDSRTGKTMWARALGPHNYLSGHLDFNSRVYSNSVEYNVIDDISPNYLKLKHWKELIGAQKDWQSNCKYGKPVQIKGGIPSIVLCNPGEGSSYKDFLNKEENRALHNWTIHNAIFVTLTAPLYQSTAQDCQT</sequence>
<protein>
    <recommendedName>
        <fullName>Replication-associated protein</fullName>
        <shortName>Rep</shortName>
        <ecNumber>2.7.7.-</ecNumber>
        <ecNumber>3.1.21.-</ecNumber>
    </recommendedName>
    <alternativeName>
        <fullName>40.2 kDa protein</fullName>
    </alternativeName>
    <alternativeName>
        <fullName>Protein AC1</fullName>
    </alternativeName>
    <alternativeName>
        <fullName>Protein AL1</fullName>
    </alternativeName>
</protein>
<dbReference type="EC" id="2.7.7.-"/>
<dbReference type="EC" id="3.1.21.-"/>
<dbReference type="EMBL" id="D00201">
    <property type="protein sequence ID" value="BAA00140.1"/>
    <property type="molecule type" value="Genomic_DNA"/>
</dbReference>
<dbReference type="RefSeq" id="NP_040770.1">
    <property type="nucleotide sequence ID" value="NC_001439.1"/>
</dbReference>
<dbReference type="SMR" id="P0CK40"/>
<dbReference type="GeneID" id="988086"/>
<dbReference type="KEGG" id="vg:988086"/>
<dbReference type="Proteomes" id="UP000008769">
    <property type="component" value="Genome"/>
</dbReference>
<dbReference type="GO" id="GO:0042025">
    <property type="term" value="C:host cell nucleus"/>
    <property type="evidence" value="ECO:0007669"/>
    <property type="project" value="UniProtKB-SubCell"/>
</dbReference>
<dbReference type="GO" id="GO:0005524">
    <property type="term" value="F:ATP binding"/>
    <property type="evidence" value="ECO:0007669"/>
    <property type="project" value="UniProtKB-KW"/>
</dbReference>
<dbReference type="GO" id="GO:0003677">
    <property type="term" value="F:DNA binding"/>
    <property type="evidence" value="ECO:0007669"/>
    <property type="project" value="UniProtKB-KW"/>
</dbReference>
<dbReference type="GO" id="GO:0016888">
    <property type="term" value="F:endodeoxyribonuclease activity, producing 5'-phosphomonoesters"/>
    <property type="evidence" value="ECO:0007669"/>
    <property type="project" value="InterPro"/>
</dbReference>
<dbReference type="GO" id="GO:0004386">
    <property type="term" value="F:helicase activity"/>
    <property type="evidence" value="ECO:0007669"/>
    <property type="project" value="UniProtKB-KW"/>
</dbReference>
<dbReference type="GO" id="GO:0046872">
    <property type="term" value="F:metal ion binding"/>
    <property type="evidence" value="ECO:0007669"/>
    <property type="project" value="UniProtKB-KW"/>
</dbReference>
<dbReference type="GO" id="GO:0016779">
    <property type="term" value="F:nucleotidyltransferase activity"/>
    <property type="evidence" value="ECO:0007669"/>
    <property type="project" value="UniProtKB-KW"/>
</dbReference>
<dbReference type="GO" id="GO:0005198">
    <property type="term" value="F:structural molecule activity"/>
    <property type="evidence" value="ECO:0007669"/>
    <property type="project" value="InterPro"/>
</dbReference>
<dbReference type="GO" id="GO:0006260">
    <property type="term" value="P:DNA replication"/>
    <property type="evidence" value="ECO:0007669"/>
    <property type="project" value="UniProtKB-KW"/>
</dbReference>
<dbReference type="FunFam" id="3.40.1310.20:FF:000001">
    <property type="entry name" value="Replication-associated protein"/>
    <property type="match status" value="1"/>
</dbReference>
<dbReference type="Gene3D" id="3.40.1310.20">
    <property type="match status" value="1"/>
</dbReference>
<dbReference type="InterPro" id="IPR049912">
    <property type="entry name" value="CRESS_DNA_REP"/>
</dbReference>
<dbReference type="InterPro" id="IPR001301">
    <property type="entry name" value="Gemini_AL1_CLV"/>
</dbReference>
<dbReference type="InterPro" id="IPR001191">
    <property type="entry name" value="Gemini_AL1_REP"/>
</dbReference>
<dbReference type="InterPro" id="IPR022692">
    <property type="entry name" value="Gemini_AL1_REP_central"/>
</dbReference>
<dbReference type="Pfam" id="PF00799">
    <property type="entry name" value="Gemini_AL1"/>
    <property type="match status" value="1"/>
</dbReference>
<dbReference type="Pfam" id="PF08283">
    <property type="entry name" value="Gemini_AL1_M"/>
    <property type="match status" value="1"/>
</dbReference>
<dbReference type="PRINTS" id="PR00227">
    <property type="entry name" value="GEMCOATAL1"/>
</dbReference>
<dbReference type="PRINTS" id="PR00228">
    <property type="entry name" value="GEMCOATCLVL1"/>
</dbReference>
<dbReference type="SUPFAM" id="SSF55464">
    <property type="entry name" value="Origin of replication-binding domain, RBD-like"/>
    <property type="match status" value="1"/>
</dbReference>
<dbReference type="PROSITE" id="PS52020">
    <property type="entry name" value="CRESS_DNA_REP"/>
    <property type="match status" value="1"/>
</dbReference>
<name>REP_BGYMJ</name>
<comment type="function">
    <text evidence="4">Essential for the replication of viral ssDNA. The closed circular ssDNA genome is first converted to a superhelical dsDNA. Rep binds a specific region at the genome origin of replication. It introduces an endonucleolytic nick within the conserved sequence 5'-TAATATTAC-3' in the intergenic region of the genome present in all geminiviruses, thereby initiating the rolling circle replication (RCR). Following cleavage, binds covalently to the 5'-phosphate of DNA as a tyrosyl ester. The cleavage gives rise to a free 3'-OH that serves as a primer for the cellular DNA polymerase. The polymerase synthesizes the (+) strand DNA by rolling circle mechanism. After one round of replication, a Rep-catalyzed nucleotidyl transfer reaction releases a circular single-stranded virus genome, thereby terminating the replication. Displays origin-specific DNA cleavage, nucleotidyl transferase, ATPase and helicase activities.</text>
</comment>
<comment type="cofactor">
    <cofactor evidence="3">
        <name>Mg(2+)</name>
        <dbReference type="ChEBI" id="CHEBI:18420"/>
    </cofactor>
    <cofactor evidence="3">
        <name>Mn(2+)</name>
        <dbReference type="ChEBI" id="CHEBI:29035"/>
    </cofactor>
    <text evidence="3">Divalent metal cations, possibly Mg(2+) or Mn(2+).</text>
</comment>
<comment type="subunit">
    <text evidence="1 4">Homooligomer. Interacts with the replication enhancer protein (REn). Interacts with host retinoblastoma-related protein 1 (RBR1), and may thereby induce the transcription of host replicative enzymes even if the cell is not dividing anymore. Interacts with host PCNA. Interacts with host SCE1 protein (By similarity). Binds to host RAD54 protein to ensure geminiviral replication.</text>
</comment>
<comment type="subcellular location">
    <subcellularLocation>
        <location evidence="1">Host nucleus</location>
    </subcellularLocation>
</comment>
<comment type="domain">
    <text evidence="1">There are 3 rolling circle replication (RCR) motifs. RCR-2 is probably involved in metal coordination. RCR-3 is required for phosphodiester bond cleavage for initiation of RCR (By similarity).</text>
</comment>
<comment type="similarity">
    <text evidence="5">Belongs to the geminiviridae Rep protein family.</text>
</comment>
<organism>
    <name type="scientific">Bean golden yellow mosaic virus (isolate Puerto Rico-Japan)</name>
    <name type="common">BGYMV</name>
    <dbReference type="NCBI Taxonomy" id="222449"/>
    <lineage>
        <taxon>Viruses</taxon>
        <taxon>Monodnaviria</taxon>
        <taxon>Shotokuvirae</taxon>
        <taxon>Cressdnaviricota</taxon>
        <taxon>Repensiviricetes</taxon>
        <taxon>Geplafuvirales</taxon>
        <taxon>Geminiviridae</taxon>
        <taxon>Begomovirus</taxon>
        <taxon>Bean golden yellow mosaic virus</taxon>
    </lineage>
</organism>